<keyword id="KW-0106">Calcium</keyword>
<keyword id="KW-1015">Disulfide bond</keyword>
<keyword id="KW-0325">Glycoprotein</keyword>
<keyword id="KW-0349">Heme</keyword>
<keyword id="KW-0376">Hydrogen peroxide</keyword>
<keyword id="KW-0408">Iron</keyword>
<keyword id="KW-0479">Metal-binding</keyword>
<keyword id="KW-0560">Oxidoreductase</keyword>
<keyword id="KW-0575">Peroxidase</keyword>
<proteinExistence type="evidence at transcript level"/>
<accession>Q01548</accession>
<evidence type="ECO:0000255" key="1"/>
<evidence type="ECO:0000255" key="2">
    <source>
        <dbReference type="PROSITE-ProRule" id="PRU00297"/>
    </source>
</evidence>
<organism>
    <name type="scientific">Hordeum vulgare</name>
    <name type="common">Barley</name>
    <dbReference type="NCBI Taxonomy" id="4513"/>
    <lineage>
        <taxon>Eukaryota</taxon>
        <taxon>Viridiplantae</taxon>
        <taxon>Streptophyta</taxon>
        <taxon>Embryophyta</taxon>
        <taxon>Tracheophyta</taxon>
        <taxon>Spermatophyta</taxon>
        <taxon>Magnoliopsida</taxon>
        <taxon>Liliopsida</taxon>
        <taxon>Poales</taxon>
        <taxon>Poaceae</taxon>
        <taxon>BOP clade</taxon>
        <taxon>Pooideae</taxon>
        <taxon>Triticodae</taxon>
        <taxon>Triticeae</taxon>
        <taxon>Hordeinae</taxon>
        <taxon>Hordeum</taxon>
    </lineage>
</organism>
<feature type="chain" id="PRO_0000055607" description="Peroxidase 2">
    <location>
        <begin position="1" status="less than"/>
        <end position="170"/>
    </location>
</feature>
<feature type="binding site" description="axial binding residue" evidence="2">
    <location>
        <position position="24"/>
    </location>
    <ligand>
        <name>heme b</name>
        <dbReference type="ChEBI" id="CHEBI:60344"/>
    </ligand>
    <ligandPart>
        <name>Fe</name>
        <dbReference type="ChEBI" id="CHEBI:18248"/>
    </ligandPart>
</feature>
<feature type="binding site" evidence="2">
    <location>
        <position position="25"/>
    </location>
    <ligand>
        <name>Ca(2+)</name>
        <dbReference type="ChEBI" id="CHEBI:29108"/>
        <label>2</label>
    </ligand>
</feature>
<feature type="binding site" evidence="2">
    <location>
        <position position="73"/>
    </location>
    <ligand>
        <name>Ca(2+)</name>
        <dbReference type="ChEBI" id="CHEBI:29108"/>
        <label>2</label>
    </ligand>
</feature>
<feature type="binding site" evidence="2">
    <location>
        <position position="76"/>
    </location>
    <ligand>
        <name>Ca(2+)</name>
        <dbReference type="ChEBI" id="CHEBI:29108"/>
        <label>2</label>
    </ligand>
</feature>
<feature type="binding site" evidence="2">
    <location>
        <position position="81"/>
    </location>
    <ligand>
        <name>Ca(2+)</name>
        <dbReference type="ChEBI" id="CHEBI:29108"/>
        <label>2</label>
    </ligand>
</feature>
<feature type="glycosylation site" description="N-linked (GlcNAc...) asparagine" evidence="1">
    <location>
        <position position="9"/>
    </location>
</feature>
<feature type="disulfide bond" evidence="2">
    <location>
        <begin position="31"/>
        <end position="59"/>
    </location>
</feature>
<feature type="non-terminal residue">
    <location>
        <position position="1"/>
    </location>
</feature>
<reference key="1">
    <citation type="journal article" date="1992" name="Physiol. Mol. Plant Pathol.">
        <title>cDNA cloning and characterization of two barley peroxidase transcripts induced differentially by the powdery mildew fungus Erysiphe graminis.</title>
        <authorList>
            <person name="Thordal-Christensen H."/>
            <person name="Brandt J."/>
            <person name="Cho B.H."/>
            <person name="Rasmussen S.K."/>
            <person name="Gregersen P.L."/>
            <person name="Smedegaard-Petersen V."/>
            <person name="Collinge D.B."/>
        </authorList>
        <dbReference type="AGRICOLA" id="IND93004675"/>
    </citation>
    <scope>NUCLEOTIDE SEQUENCE [MRNA]</scope>
    <source>
        <strain>cv. Carina</strain>
        <tissue>Leaf</tissue>
    </source>
</reference>
<sequence>STLISSFANRSLDVADLVSLSGAHTFGVAHCPAFEDRSSRVRHNPAIDGKFATALRNKCSGDNPSGTLTQKLDVRTPDVFDNKYYFDLIARQGLFKSDQGLIDHPTTKRMATRFSLNQGAFFEQFARSMTKMSNMDILTGTKGEIRNNCAVPNRRVRTSRPPSPARGDRR</sequence>
<name>PER2_HORVU</name>
<protein>
    <recommendedName>
        <fullName>Peroxidase 2</fullName>
        <ecNumber>1.11.1.7</ecNumber>
    </recommendedName>
</protein>
<comment type="function">
    <text>Removal of H(2)O(2), oxidation of toxic reductants, biosynthesis and degradation of lignin, suberization, auxin catabolism, response to environmental stresses such as wounding, pathogen attack and oxidative stress. These functions might be dependent on each isozyme/isoform in each plant tissue.</text>
</comment>
<comment type="function">
    <text>Involved in defense response to powdery meldew fungus.</text>
</comment>
<comment type="catalytic activity">
    <reaction>
        <text>2 a phenolic donor + H2O2 = 2 a phenolic radical donor + 2 H2O</text>
        <dbReference type="Rhea" id="RHEA:56136"/>
        <dbReference type="ChEBI" id="CHEBI:15377"/>
        <dbReference type="ChEBI" id="CHEBI:16240"/>
        <dbReference type="ChEBI" id="CHEBI:139520"/>
        <dbReference type="ChEBI" id="CHEBI:139521"/>
        <dbReference type="EC" id="1.11.1.7"/>
    </reaction>
</comment>
<comment type="cofactor">
    <cofactor>
        <name>Ca(2+)</name>
        <dbReference type="ChEBI" id="CHEBI:29108"/>
    </cofactor>
    <text>Binds 2 calcium ions per subunit.</text>
</comment>
<comment type="cofactor">
    <cofactor>
        <name>heme b</name>
        <dbReference type="ChEBI" id="CHEBI:60344"/>
    </cofactor>
    <text>Binds 1 heme b (iron(II)-protoporphyrin IX) group per subunit.</text>
</comment>
<comment type="similarity">
    <text evidence="2">Belongs to the peroxidase family. Classical plant (class III) peroxidase subfamily.</text>
</comment>
<dbReference type="EC" id="1.11.1.7"/>
<dbReference type="EMBL" id="X62438">
    <property type="protein sequence ID" value="CAA44304.1"/>
    <property type="molecule type" value="mRNA"/>
</dbReference>
<dbReference type="PIR" id="S18064">
    <property type="entry name" value="S18064"/>
</dbReference>
<dbReference type="SMR" id="Q01548"/>
<dbReference type="ExpressionAtlas" id="Q01548">
    <property type="expression patterns" value="baseline and differential"/>
</dbReference>
<dbReference type="GO" id="GO:0020037">
    <property type="term" value="F:heme binding"/>
    <property type="evidence" value="ECO:0007669"/>
    <property type="project" value="InterPro"/>
</dbReference>
<dbReference type="GO" id="GO:0140825">
    <property type="term" value="F:lactoperoxidase activity"/>
    <property type="evidence" value="ECO:0007669"/>
    <property type="project" value="UniProtKB-EC"/>
</dbReference>
<dbReference type="GO" id="GO:0046872">
    <property type="term" value="F:metal ion binding"/>
    <property type="evidence" value="ECO:0007669"/>
    <property type="project" value="UniProtKB-KW"/>
</dbReference>
<dbReference type="GO" id="GO:0042744">
    <property type="term" value="P:hydrogen peroxide catabolic process"/>
    <property type="evidence" value="ECO:0007669"/>
    <property type="project" value="UniProtKB-KW"/>
</dbReference>
<dbReference type="GO" id="GO:0006979">
    <property type="term" value="P:response to oxidative stress"/>
    <property type="evidence" value="ECO:0007669"/>
    <property type="project" value="InterPro"/>
</dbReference>
<dbReference type="FunFam" id="1.10.420.10:FF:000006">
    <property type="entry name" value="Peroxidase"/>
    <property type="match status" value="1"/>
</dbReference>
<dbReference type="Gene3D" id="1.10.520.10">
    <property type="match status" value="1"/>
</dbReference>
<dbReference type="Gene3D" id="1.10.420.10">
    <property type="entry name" value="Peroxidase, domain 2"/>
    <property type="match status" value="1"/>
</dbReference>
<dbReference type="InterPro" id="IPR002016">
    <property type="entry name" value="Haem_peroxidase"/>
</dbReference>
<dbReference type="InterPro" id="IPR010255">
    <property type="entry name" value="Haem_peroxidase_sf"/>
</dbReference>
<dbReference type="InterPro" id="IPR000823">
    <property type="entry name" value="Peroxidase_pln"/>
</dbReference>
<dbReference type="InterPro" id="IPR019793">
    <property type="entry name" value="Peroxidases_heam-ligand_BS"/>
</dbReference>
<dbReference type="PANTHER" id="PTHR31517">
    <property type="match status" value="1"/>
</dbReference>
<dbReference type="PANTHER" id="PTHR31517:SF51">
    <property type="entry name" value="PEROXIDASE 55"/>
    <property type="match status" value="1"/>
</dbReference>
<dbReference type="Pfam" id="PF00141">
    <property type="entry name" value="peroxidase"/>
    <property type="match status" value="1"/>
</dbReference>
<dbReference type="PRINTS" id="PR00458">
    <property type="entry name" value="PEROXIDASE"/>
</dbReference>
<dbReference type="PRINTS" id="PR00461">
    <property type="entry name" value="PLPEROXIDASE"/>
</dbReference>
<dbReference type="SUPFAM" id="SSF48113">
    <property type="entry name" value="Heme-dependent peroxidases"/>
    <property type="match status" value="1"/>
</dbReference>
<dbReference type="PROSITE" id="PS00435">
    <property type="entry name" value="PEROXIDASE_1"/>
    <property type="match status" value="1"/>
</dbReference>
<dbReference type="PROSITE" id="PS50873">
    <property type="entry name" value="PEROXIDASE_4"/>
    <property type="match status" value="1"/>
</dbReference>